<evidence type="ECO:0000250" key="1">
    <source>
        <dbReference type="UniProtKB" id="Q01726"/>
    </source>
</evidence>
<evidence type="ECO:0000255" key="2"/>
<evidence type="ECO:0000255" key="3">
    <source>
        <dbReference type="PROSITE-ProRule" id="PRU00521"/>
    </source>
</evidence>
<gene>
    <name type="primary">MC1R</name>
</gene>
<organism>
    <name type="scientific">Allenopithecus nigroviridis</name>
    <name type="common">Allen's swamp monkey</name>
    <dbReference type="NCBI Taxonomy" id="54135"/>
    <lineage>
        <taxon>Eukaryota</taxon>
        <taxon>Metazoa</taxon>
        <taxon>Chordata</taxon>
        <taxon>Craniata</taxon>
        <taxon>Vertebrata</taxon>
        <taxon>Euteleostomi</taxon>
        <taxon>Mammalia</taxon>
        <taxon>Eutheria</taxon>
        <taxon>Euarchontoglires</taxon>
        <taxon>Primates</taxon>
        <taxon>Haplorrhini</taxon>
        <taxon>Catarrhini</taxon>
        <taxon>Cercopithecidae</taxon>
        <taxon>Cercopithecinae</taxon>
        <taxon>Allenopithecus</taxon>
    </lineage>
</organism>
<protein>
    <recommendedName>
        <fullName>Melanocyte-stimulating hormone receptor</fullName>
        <shortName>MSH-R</shortName>
    </recommendedName>
    <alternativeName>
        <fullName>Melanocortin receptor 1</fullName>
        <shortName>MC1-R</shortName>
    </alternativeName>
</protein>
<comment type="function">
    <text evidence="1">Receptor for MSH (alpha, beta and gamma) and ACTH. The activity of this receptor is mediated by G proteins which activate adenylate cyclase. Mediates melanogenesis, the production of eumelanin (black/brown) and phaeomelanin (red/yellow), via regulation of cAMP signaling in melanocytes.</text>
</comment>
<comment type="subunit">
    <text evidence="1">Interacts with MGRN1, but does not undergo MGRN1-mediated ubiquitination; this interaction competes with GNAS-binding and thus inhibits agonist-induced cAMP production. Interacts with OPN3; the interaction results in a decrease in MC1R-mediated cAMP signaling and ultimately a decrease in melanin production in melanocytes.</text>
</comment>
<comment type="subcellular location">
    <subcellularLocation>
        <location evidence="1">Cell membrane</location>
        <topology evidence="2">Multi-pass membrane protein</topology>
    </subcellularLocation>
</comment>
<comment type="similarity">
    <text evidence="3">Belongs to the G-protein coupled receptor 1 family.</text>
</comment>
<sequence>MPVQGSQRRLLGSLNSTPTATPHLGLAANQTGAWCLEVSIPDGLFLSLGLVSLVENVLVVTAIAKNRNLHSPMYCFICCLALSDLLVSGSNMLETAVTLLLEAGALAARAAVVQQLDNVIDVITCSSMLSSLCFLGAIAVDRYISIFYALRYHSIVTLPRARRAVAAIWVASVLFSMLFIAYYDHAAVLLCLVVFFLAMLVLMAVLYVHMLARACQHAQGIARLHKRQRPAHQGFGLKGAATLTILLGIFFLCWGPFFLHLTLIVLCPQHPTCSCIFKNFNLFLALIICNAIIDPLIYAFRSQELRRTLKEVLLCSW</sequence>
<proteinExistence type="inferred from homology"/>
<accession>Q864K5</accession>
<feature type="chain" id="PRO_0000069785" description="Melanocyte-stimulating hormone receptor">
    <location>
        <begin position="1"/>
        <end position="317"/>
    </location>
</feature>
<feature type="topological domain" description="Extracellular" evidence="2">
    <location>
        <begin position="1"/>
        <end position="37"/>
    </location>
</feature>
<feature type="transmembrane region" description="Helical; Name=1" evidence="2">
    <location>
        <begin position="38"/>
        <end position="63"/>
    </location>
</feature>
<feature type="topological domain" description="Cytoplasmic" evidence="2">
    <location>
        <begin position="64"/>
        <end position="72"/>
    </location>
</feature>
<feature type="transmembrane region" description="Helical; Name=2" evidence="2">
    <location>
        <begin position="73"/>
        <end position="93"/>
    </location>
</feature>
<feature type="topological domain" description="Extracellular" evidence="2">
    <location>
        <begin position="94"/>
        <end position="118"/>
    </location>
</feature>
<feature type="transmembrane region" description="Helical; Name=3" evidence="2">
    <location>
        <begin position="119"/>
        <end position="140"/>
    </location>
</feature>
<feature type="topological domain" description="Cytoplasmic" evidence="2">
    <location>
        <begin position="141"/>
        <end position="163"/>
    </location>
</feature>
<feature type="transmembrane region" description="Helical; Name=4" evidence="2">
    <location>
        <begin position="164"/>
        <end position="183"/>
    </location>
</feature>
<feature type="topological domain" description="Extracellular" evidence="2">
    <location>
        <begin position="184"/>
        <end position="191"/>
    </location>
</feature>
<feature type="transmembrane region" description="Helical; Name=5" evidence="2">
    <location>
        <begin position="192"/>
        <end position="211"/>
    </location>
</feature>
<feature type="topological domain" description="Cytoplasmic" evidence="2">
    <location>
        <begin position="212"/>
        <end position="240"/>
    </location>
</feature>
<feature type="transmembrane region" description="Helical; Name=6" evidence="2">
    <location>
        <begin position="241"/>
        <end position="266"/>
    </location>
</feature>
<feature type="topological domain" description="Extracellular" evidence="2">
    <location>
        <begin position="267"/>
        <end position="279"/>
    </location>
</feature>
<feature type="transmembrane region" description="Helical; Name=7" evidence="2">
    <location>
        <begin position="280"/>
        <end position="300"/>
    </location>
</feature>
<feature type="topological domain" description="Cytoplasmic" evidence="2">
    <location>
        <begin position="301"/>
        <end position="317"/>
    </location>
</feature>
<feature type="lipid moiety-binding region" description="S-palmitoyl cysteine" evidence="2">
    <location>
        <position position="315"/>
    </location>
</feature>
<feature type="glycosylation site" description="N-linked (GlcNAc...) asparagine" evidence="2">
    <location>
        <position position="29"/>
    </location>
</feature>
<reference key="1">
    <citation type="journal article" date="2003" name="Am. J. Phys. Anthropol.">
        <title>Evolution of a pigmentation gene, the melanocortin-1 receptor, in primates.</title>
        <authorList>
            <person name="Mundy N.I."/>
            <person name="Kelly J."/>
        </authorList>
    </citation>
    <scope>NUCLEOTIDE SEQUENCE [GENOMIC DNA]</scope>
    <source>
        <strain>Isolate 1</strain>
    </source>
</reference>
<name>MSHR_ALLNI</name>
<keyword id="KW-1003">Cell membrane</keyword>
<keyword id="KW-0297">G-protein coupled receptor</keyword>
<keyword id="KW-0325">Glycoprotein</keyword>
<keyword id="KW-0449">Lipoprotein</keyword>
<keyword id="KW-0472">Membrane</keyword>
<keyword id="KW-0564">Palmitate</keyword>
<keyword id="KW-0675">Receptor</keyword>
<keyword id="KW-0807">Transducer</keyword>
<keyword id="KW-0812">Transmembrane</keyword>
<keyword id="KW-1133">Transmembrane helix</keyword>
<dbReference type="EMBL" id="AY205092">
    <property type="protein sequence ID" value="AAP30966.1"/>
    <property type="molecule type" value="Genomic_DNA"/>
</dbReference>
<dbReference type="SMR" id="Q864K5"/>
<dbReference type="GlyCosmos" id="Q864K5">
    <property type="glycosylation" value="1 site, No reported glycans"/>
</dbReference>
<dbReference type="GO" id="GO:0005886">
    <property type="term" value="C:plasma membrane"/>
    <property type="evidence" value="ECO:0000250"/>
    <property type="project" value="UniProtKB"/>
</dbReference>
<dbReference type="GO" id="GO:0004980">
    <property type="term" value="F:melanocyte-stimulating hormone receptor activity"/>
    <property type="evidence" value="ECO:0007669"/>
    <property type="project" value="InterPro"/>
</dbReference>
<dbReference type="GO" id="GO:0007189">
    <property type="term" value="P:adenylate cyclase-activating G protein-coupled receptor signaling pathway"/>
    <property type="evidence" value="ECO:0007669"/>
    <property type="project" value="UniProtKB-ARBA"/>
</dbReference>
<dbReference type="CDD" id="cd15351">
    <property type="entry name" value="7tmA_MC1R"/>
    <property type="match status" value="1"/>
</dbReference>
<dbReference type="FunFam" id="1.20.1070.10:FF:000211">
    <property type="entry name" value="Melanocyte-stimulating hormone receptor"/>
    <property type="match status" value="1"/>
</dbReference>
<dbReference type="Gene3D" id="1.20.1070.10">
    <property type="entry name" value="Rhodopsin 7-helix transmembrane proteins"/>
    <property type="match status" value="1"/>
</dbReference>
<dbReference type="InterPro" id="IPR000276">
    <property type="entry name" value="GPCR_Rhodpsn"/>
</dbReference>
<dbReference type="InterPro" id="IPR017452">
    <property type="entry name" value="GPCR_Rhodpsn_7TM"/>
</dbReference>
<dbReference type="InterPro" id="IPR001671">
    <property type="entry name" value="Melcrt_ACTH_rcpt"/>
</dbReference>
<dbReference type="InterPro" id="IPR000761">
    <property type="entry name" value="MSH_rcpt"/>
</dbReference>
<dbReference type="PANTHER" id="PTHR22750">
    <property type="entry name" value="G-PROTEIN COUPLED RECEPTOR"/>
    <property type="match status" value="1"/>
</dbReference>
<dbReference type="Pfam" id="PF00001">
    <property type="entry name" value="7tm_1"/>
    <property type="match status" value="1"/>
</dbReference>
<dbReference type="PRINTS" id="PR00237">
    <property type="entry name" value="GPCRRHODOPSN"/>
</dbReference>
<dbReference type="PRINTS" id="PR00534">
    <property type="entry name" value="MCRFAMILY"/>
</dbReference>
<dbReference type="PRINTS" id="PR00536">
    <property type="entry name" value="MELNOCYTESHR"/>
</dbReference>
<dbReference type="SMART" id="SM01381">
    <property type="entry name" value="7TM_GPCR_Srsx"/>
    <property type="match status" value="1"/>
</dbReference>
<dbReference type="SUPFAM" id="SSF81321">
    <property type="entry name" value="Family A G protein-coupled receptor-like"/>
    <property type="match status" value="1"/>
</dbReference>
<dbReference type="PROSITE" id="PS00237">
    <property type="entry name" value="G_PROTEIN_RECEP_F1_1"/>
    <property type="match status" value="1"/>
</dbReference>
<dbReference type="PROSITE" id="PS50262">
    <property type="entry name" value="G_PROTEIN_RECEP_F1_2"/>
    <property type="match status" value="1"/>
</dbReference>